<dbReference type="EMBL" id="AE013598">
    <property type="protein sequence ID" value="AAW75546.1"/>
    <property type="molecule type" value="Genomic_DNA"/>
</dbReference>
<dbReference type="SMR" id="Q5H0H5"/>
<dbReference type="STRING" id="291331.XOO2292"/>
<dbReference type="KEGG" id="xoo:XOO2292"/>
<dbReference type="HOGENOM" id="CLU_014841_3_0_6"/>
<dbReference type="Proteomes" id="UP000006735">
    <property type="component" value="Chromosome"/>
</dbReference>
<dbReference type="GO" id="GO:0005737">
    <property type="term" value="C:cytoplasm"/>
    <property type="evidence" value="ECO:0007669"/>
    <property type="project" value="UniProtKB-SubCell"/>
</dbReference>
<dbReference type="GO" id="GO:0009380">
    <property type="term" value="C:excinuclease repair complex"/>
    <property type="evidence" value="ECO:0007669"/>
    <property type="project" value="InterPro"/>
</dbReference>
<dbReference type="GO" id="GO:0003677">
    <property type="term" value="F:DNA binding"/>
    <property type="evidence" value="ECO:0007669"/>
    <property type="project" value="UniProtKB-UniRule"/>
</dbReference>
<dbReference type="GO" id="GO:0009381">
    <property type="term" value="F:excinuclease ABC activity"/>
    <property type="evidence" value="ECO:0007669"/>
    <property type="project" value="UniProtKB-UniRule"/>
</dbReference>
<dbReference type="GO" id="GO:0006289">
    <property type="term" value="P:nucleotide-excision repair"/>
    <property type="evidence" value="ECO:0007669"/>
    <property type="project" value="UniProtKB-UniRule"/>
</dbReference>
<dbReference type="GO" id="GO:0009432">
    <property type="term" value="P:SOS response"/>
    <property type="evidence" value="ECO:0007669"/>
    <property type="project" value="UniProtKB-UniRule"/>
</dbReference>
<dbReference type="CDD" id="cd10434">
    <property type="entry name" value="GIY-YIG_UvrC_Cho"/>
    <property type="match status" value="1"/>
</dbReference>
<dbReference type="FunFam" id="1.10.150.20:FF:000005">
    <property type="entry name" value="UvrABC system protein C"/>
    <property type="match status" value="1"/>
</dbReference>
<dbReference type="FunFam" id="3.30.420.340:FF:000001">
    <property type="entry name" value="UvrABC system protein C"/>
    <property type="match status" value="1"/>
</dbReference>
<dbReference type="FunFam" id="3.40.1440.10:FF:000001">
    <property type="entry name" value="UvrABC system protein C"/>
    <property type="match status" value="1"/>
</dbReference>
<dbReference type="Gene3D" id="1.10.150.20">
    <property type="entry name" value="5' to 3' exonuclease, C-terminal subdomain"/>
    <property type="match status" value="1"/>
</dbReference>
<dbReference type="Gene3D" id="3.40.1440.10">
    <property type="entry name" value="GIY-YIG endonuclease"/>
    <property type="match status" value="1"/>
</dbReference>
<dbReference type="Gene3D" id="4.10.860.10">
    <property type="entry name" value="UVR domain"/>
    <property type="match status" value="1"/>
</dbReference>
<dbReference type="Gene3D" id="3.30.420.340">
    <property type="entry name" value="UvrC, RNAse H endonuclease domain"/>
    <property type="match status" value="1"/>
</dbReference>
<dbReference type="HAMAP" id="MF_00203">
    <property type="entry name" value="UvrC"/>
    <property type="match status" value="1"/>
</dbReference>
<dbReference type="InterPro" id="IPR000305">
    <property type="entry name" value="GIY-YIG_endonuc"/>
</dbReference>
<dbReference type="InterPro" id="IPR035901">
    <property type="entry name" value="GIY-YIG_endonuc_sf"/>
</dbReference>
<dbReference type="InterPro" id="IPR047296">
    <property type="entry name" value="GIY-YIG_UvrC_Cho"/>
</dbReference>
<dbReference type="InterPro" id="IPR003583">
    <property type="entry name" value="Hlx-hairpin-Hlx_DNA-bd_motif"/>
</dbReference>
<dbReference type="InterPro" id="IPR010994">
    <property type="entry name" value="RuvA_2-like"/>
</dbReference>
<dbReference type="InterPro" id="IPR001943">
    <property type="entry name" value="UVR_dom"/>
</dbReference>
<dbReference type="InterPro" id="IPR036876">
    <property type="entry name" value="UVR_dom_sf"/>
</dbReference>
<dbReference type="InterPro" id="IPR050066">
    <property type="entry name" value="UvrABC_protein_C"/>
</dbReference>
<dbReference type="InterPro" id="IPR004791">
    <property type="entry name" value="UvrC"/>
</dbReference>
<dbReference type="InterPro" id="IPR001162">
    <property type="entry name" value="UvrC_RNase_H_dom"/>
</dbReference>
<dbReference type="InterPro" id="IPR038476">
    <property type="entry name" value="UvrC_RNase_H_dom_sf"/>
</dbReference>
<dbReference type="NCBIfam" id="TIGR00194">
    <property type="entry name" value="uvrC"/>
    <property type="match status" value="1"/>
</dbReference>
<dbReference type="PANTHER" id="PTHR30562:SF1">
    <property type="entry name" value="UVRABC SYSTEM PROTEIN C"/>
    <property type="match status" value="1"/>
</dbReference>
<dbReference type="PANTHER" id="PTHR30562">
    <property type="entry name" value="UVRC/OXIDOREDUCTASE"/>
    <property type="match status" value="1"/>
</dbReference>
<dbReference type="Pfam" id="PF01541">
    <property type="entry name" value="GIY-YIG"/>
    <property type="match status" value="1"/>
</dbReference>
<dbReference type="Pfam" id="PF14520">
    <property type="entry name" value="HHH_5"/>
    <property type="match status" value="1"/>
</dbReference>
<dbReference type="Pfam" id="PF02151">
    <property type="entry name" value="UVR"/>
    <property type="match status" value="1"/>
</dbReference>
<dbReference type="Pfam" id="PF22920">
    <property type="entry name" value="UvrC_RNaseH"/>
    <property type="match status" value="1"/>
</dbReference>
<dbReference type="Pfam" id="PF08459">
    <property type="entry name" value="UvrC_RNaseH_dom"/>
    <property type="match status" value="1"/>
</dbReference>
<dbReference type="SMART" id="SM00465">
    <property type="entry name" value="GIYc"/>
    <property type="match status" value="1"/>
</dbReference>
<dbReference type="SMART" id="SM00278">
    <property type="entry name" value="HhH1"/>
    <property type="match status" value="2"/>
</dbReference>
<dbReference type="SUPFAM" id="SSF46600">
    <property type="entry name" value="C-terminal UvrC-binding domain of UvrB"/>
    <property type="match status" value="1"/>
</dbReference>
<dbReference type="SUPFAM" id="SSF82771">
    <property type="entry name" value="GIY-YIG endonuclease"/>
    <property type="match status" value="1"/>
</dbReference>
<dbReference type="SUPFAM" id="SSF47781">
    <property type="entry name" value="RuvA domain 2-like"/>
    <property type="match status" value="1"/>
</dbReference>
<dbReference type="PROSITE" id="PS50164">
    <property type="entry name" value="GIY_YIG"/>
    <property type="match status" value="1"/>
</dbReference>
<dbReference type="PROSITE" id="PS50151">
    <property type="entry name" value="UVR"/>
    <property type="match status" value="1"/>
</dbReference>
<dbReference type="PROSITE" id="PS50165">
    <property type="entry name" value="UVRC"/>
    <property type="match status" value="1"/>
</dbReference>
<accession>Q5H0H5</accession>
<gene>
    <name evidence="1" type="primary">uvrC</name>
    <name type="ordered locus">XOO2292</name>
</gene>
<name>UVRC_XANOR</name>
<evidence type="ECO:0000255" key="1">
    <source>
        <dbReference type="HAMAP-Rule" id="MF_00203"/>
    </source>
</evidence>
<protein>
    <recommendedName>
        <fullName evidence="1">UvrABC system protein C</fullName>
        <shortName evidence="1">Protein UvrC</shortName>
    </recommendedName>
    <alternativeName>
        <fullName evidence="1">Excinuclease ABC subunit C</fullName>
    </alternativeName>
</protein>
<keyword id="KW-0963">Cytoplasm</keyword>
<keyword id="KW-0227">DNA damage</keyword>
<keyword id="KW-0228">DNA excision</keyword>
<keyword id="KW-0234">DNA repair</keyword>
<keyword id="KW-0267">Excision nuclease</keyword>
<keyword id="KW-1185">Reference proteome</keyword>
<keyword id="KW-0742">SOS response</keyword>
<feature type="chain" id="PRO_0000227495" description="UvrABC system protein C">
    <location>
        <begin position="1"/>
        <end position="618"/>
    </location>
</feature>
<feature type="domain" description="GIY-YIG" evidence="1">
    <location>
        <begin position="20"/>
        <end position="98"/>
    </location>
</feature>
<feature type="domain" description="UVR" evidence="1">
    <location>
        <begin position="207"/>
        <end position="242"/>
    </location>
</feature>
<organism>
    <name type="scientific">Xanthomonas oryzae pv. oryzae (strain KACC10331 / KXO85)</name>
    <dbReference type="NCBI Taxonomy" id="291331"/>
    <lineage>
        <taxon>Bacteria</taxon>
        <taxon>Pseudomonadati</taxon>
        <taxon>Pseudomonadota</taxon>
        <taxon>Gammaproteobacteria</taxon>
        <taxon>Lysobacterales</taxon>
        <taxon>Lysobacteraceae</taxon>
        <taxon>Xanthomonas</taxon>
    </lineage>
</organism>
<reference key="1">
    <citation type="journal article" date="2005" name="Nucleic Acids Res.">
        <title>The genome sequence of Xanthomonas oryzae pathovar oryzae KACC10331, the bacterial blight pathogen of rice.</title>
        <authorList>
            <person name="Lee B.-M."/>
            <person name="Park Y.-J."/>
            <person name="Park D.-S."/>
            <person name="Kang H.-W."/>
            <person name="Kim J.-G."/>
            <person name="Song E.-S."/>
            <person name="Park I.-C."/>
            <person name="Yoon U.-H."/>
            <person name="Hahn J.-H."/>
            <person name="Koo B.-S."/>
            <person name="Lee G.-B."/>
            <person name="Kim H."/>
            <person name="Park H.-S."/>
            <person name="Yoon K.-O."/>
            <person name="Kim J.-H."/>
            <person name="Jung C.-H."/>
            <person name="Koh N.-H."/>
            <person name="Seo J.-S."/>
            <person name="Go S.-J."/>
        </authorList>
    </citation>
    <scope>NUCLEOTIDE SEQUENCE [LARGE SCALE GENOMIC DNA]</scope>
    <source>
        <strain>KACC10331 / KXO85</strain>
    </source>
</reference>
<sequence>MSAGPQSDFDGKAFAAQLSTAPGVYRMYAGDDTLLYVGKAGALRKRVGSYFNGTPKNARLTSMLSQVARMDVTVTRSEAEALLLENQLIKSLSPRYNVSLRDDKSYPYVLLTREHWPRIALHRGPRAVQGRYFGPYTGVTGVRETLSLMHKLFKLRSCEDSVFRNRSRPCLQYQIGRCSGPCVDLVAAPDYAESVRRATMFLEGKSDQLGEEIMQSMQQASEALEFERAARLRDLLSSLRSMQNRQYVDGRAADLDVLACATQSSQACVLLLSFRDGRNLGTRSFFPKTNGEDSADEILGAFVSQYYAEHSPPREILLDREIPETELIEAALSTAAEHKVALKWNVRGERAGYLLLATRNAQLTLVTELTSQSAQHARSEALREMLGLAEPVKRVECFDISHTMGEATVASCVVFDASGPVRGQYRRFNISGITPGDDYAAMRQAIERRFRRAVEENGVLPDVLLIDGGAGQLAQAQAALADLGVENVWLVGVAKGEERRAGHEALIMADGRELRPGAASPALQFIQQVRDEAHRFAITGHRGRRQKARMTSKLEDIPGIGPRRRASLLKHFGGLVGLKAAGEAEIARVEGVNAALAARIYANLHGLALPDAAGESSP</sequence>
<proteinExistence type="inferred from homology"/>
<comment type="function">
    <text evidence="1">The UvrABC repair system catalyzes the recognition and processing of DNA lesions. UvrC both incises the 5' and 3' sides of the lesion. The N-terminal half is responsible for the 3' incision and the C-terminal half is responsible for the 5' incision.</text>
</comment>
<comment type="subunit">
    <text evidence="1">Interacts with UvrB in an incision complex.</text>
</comment>
<comment type="subcellular location">
    <subcellularLocation>
        <location evidence="1">Cytoplasm</location>
    </subcellularLocation>
</comment>
<comment type="similarity">
    <text evidence="1">Belongs to the UvrC family.</text>
</comment>